<reference key="1">
    <citation type="journal article" date="2004" name="J. Mol. Microbiol. Biotechnol.">
        <title>The complete genome sequence of Bacillus licheniformis DSM13, an organism with great industrial potential.</title>
        <authorList>
            <person name="Veith B."/>
            <person name="Herzberg C."/>
            <person name="Steckel S."/>
            <person name="Feesche J."/>
            <person name="Maurer K.H."/>
            <person name="Ehrenreich P."/>
            <person name="Baeumer S."/>
            <person name="Henne A."/>
            <person name="Liesegang H."/>
            <person name="Merkl R."/>
            <person name="Ehrenreich A."/>
            <person name="Gottschalk G."/>
        </authorList>
    </citation>
    <scope>NUCLEOTIDE SEQUENCE [LARGE SCALE GENOMIC DNA]</scope>
    <source>
        <strain>ATCC 14580 / DSM 13 / JCM 2505 / CCUG 7422 / NBRC 12200 / NCIMB 9375 / NCTC 10341 / NRRL NRS-1264 / Gibson 46</strain>
    </source>
</reference>
<reference key="2">
    <citation type="journal article" date="2004" name="Genome Biol.">
        <title>Complete genome sequence of the industrial bacterium Bacillus licheniformis and comparisons with closely related Bacillus species.</title>
        <authorList>
            <person name="Rey M.W."/>
            <person name="Ramaiya P."/>
            <person name="Nelson B.A."/>
            <person name="Brody-Karpin S.D."/>
            <person name="Zaretsky E.J."/>
            <person name="Tang M."/>
            <person name="Lopez de Leon A."/>
            <person name="Xiang H."/>
            <person name="Gusti V."/>
            <person name="Clausen I.G."/>
            <person name="Olsen P.B."/>
            <person name="Rasmussen M.D."/>
            <person name="Andersen J.T."/>
            <person name="Joergensen P.L."/>
            <person name="Larsen T.S."/>
            <person name="Sorokin A."/>
            <person name="Bolotin A."/>
            <person name="Lapidus A."/>
            <person name="Galleron N."/>
            <person name="Ehrlich S.D."/>
            <person name="Berka R.M."/>
        </authorList>
    </citation>
    <scope>NUCLEOTIDE SEQUENCE [LARGE SCALE GENOMIC DNA]</scope>
    <source>
        <strain>ATCC 14580 / DSM 13 / JCM 2505 / CCUG 7422 / NBRC 12200 / NCIMB 9375 / NCTC 10341 / NRRL NRS-1264 / Gibson 46</strain>
    </source>
</reference>
<feature type="chain" id="PRO_0000113097" description="Aspartate carbamoyltransferase catalytic subunit">
    <location>
        <begin position="1"/>
        <end position="306"/>
    </location>
</feature>
<feature type="binding site" evidence="1">
    <location>
        <position position="49"/>
    </location>
    <ligand>
        <name>carbamoyl phosphate</name>
        <dbReference type="ChEBI" id="CHEBI:58228"/>
    </ligand>
</feature>
<feature type="binding site" evidence="1">
    <location>
        <position position="50"/>
    </location>
    <ligand>
        <name>carbamoyl phosphate</name>
        <dbReference type="ChEBI" id="CHEBI:58228"/>
    </ligand>
</feature>
<feature type="binding site" evidence="1">
    <location>
        <position position="77"/>
    </location>
    <ligand>
        <name>L-aspartate</name>
        <dbReference type="ChEBI" id="CHEBI:29991"/>
    </ligand>
</feature>
<feature type="binding site" evidence="1">
    <location>
        <position position="99"/>
    </location>
    <ligand>
        <name>carbamoyl phosphate</name>
        <dbReference type="ChEBI" id="CHEBI:58228"/>
    </ligand>
</feature>
<feature type="binding site" evidence="1">
    <location>
        <position position="127"/>
    </location>
    <ligand>
        <name>carbamoyl phosphate</name>
        <dbReference type="ChEBI" id="CHEBI:58228"/>
    </ligand>
</feature>
<feature type="binding site" evidence="1">
    <location>
        <position position="130"/>
    </location>
    <ligand>
        <name>carbamoyl phosphate</name>
        <dbReference type="ChEBI" id="CHEBI:58228"/>
    </ligand>
</feature>
<feature type="binding site" evidence="1">
    <location>
        <position position="160"/>
    </location>
    <ligand>
        <name>L-aspartate</name>
        <dbReference type="ChEBI" id="CHEBI:29991"/>
    </ligand>
</feature>
<feature type="binding site" evidence="1">
    <location>
        <position position="211"/>
    </location>
    <ligand>
        <name>L-aspartate</name>
        <dbReference type="ChEBI" id="CHEBI:29991"/>
    </ligand>
</feature>
<feature type="binding site" evidence="1">
    <location>
        <position position="250"/>
    </location>
    <ligand>
        <name>carbamoyl phosphate</name>
        <dbReference type="ChEBI" id="CHEBI:58228"/>
    </ligand>
</feature>
<feature type="binding site" evidence="1">
    <location>
        <position position="251"/>
    </location>
    <ligand>
        <name>carbamoyl phosphate</name>
        <dbReference type="ChEBI" id="CHEBI:58228"/>
    </ligand>
</feature>
<name>PYRB_BACLD</name>
<gene>
    <name evidence="1" type="primary">pyrB</name>
    <name type="ordered locus">BLi01769</name>
    <name type="ordered locus">BL02273</name>
</gene>
<sequence>MKHLTAMNELSLEDIHELIEEARELKKGKSDSVLSGKFAANLFFEPSTRTRFSFEVAEKKLGMNVLNLDGVSTSVQKGESLYDTVKTLESIGADVCVIRHSHDHYYDELIGHVGIPVINAGDGCGQHPTQSLLDLMTIHEEWGRFAGLTVSIHGDIKHSRVARSNAEVLTRLGAKVLFSGPDEWRDEDNPYGTYVSPDEAVAHSDVVMLLRIQHERHEKKAAERDYLETFGLSLKRAELLKKDAVIMHPAPVNRGVEIDSALVESGRSRIFKQMENGVYIRMAVLKRALLNGENKKRGDQAYVLFN</sequence>
<protein>
    <recommendedName>
        <fullName evidence="1">Aspartate carbamoyltransferase catalytic subunit</fullName>
        <ecNumber evidence="1">2.1.3.2</ecNumber>
    </recommendedName>
    <alternativeName>
        <fullName evidence="1">Aspartate transcarbamylase</fullName>
        <shortName evidence="1">ATCase</shortName>
    </alternativeName>
</protein>
<dbReference type="EC" id="2.1.3.2" evidence="1"/>
<dbReference type="EMBL" id="AE017333">
    <property type="protein sequence ID" value="AAU40664.1"/>
    <property type="molecule type" value="Genomic_DNA"/>
</dbReference>
<dbReference type="EMBL" id="CP000002">
    <property type="protein sequence ID" value="AAU23304.1"/>
    <property type="molecule type" value="Genomic_DNA"/>
</dbReference>
<dbReference type="RefSeq" id="WP_003181618.1">
    <property type="nucleotide sequence ID" value="NC_006322.1"/>
</dbReference>
<dbReference type="SMR" id="Q65JV0"/>
<dbReference type="STRING" id="279010.BL02273"/>
<dbReference type="KEGG" id="bld:BLi01769"/>
<dbReference type="KEGG" id="bli:BL02273"/>
<dbReference type="eggNOG" id="COG0540">
    <property type="taxonomic scope" value="Bacteria"/>
</dbReference>
<dbReference type="HOGENOM" id="CLU_043846_2_1_9"/>
<dbReference type="UniPathway" id="UPA00070">
    <property type="reaction ID" value="UER00116"/>
</dbReference>
<dbReference type="Proteomes" id="UP000000606">
    <property type="component" value="Chromosome"/>
</dbReference>
<dbReference type="GO" id="GO:0005829">
    <property type="term" value="C:cytosol"/>
    <property type="evidence" value="ECO:0007669"/>
    <property type="project" value="TreeGrafter"/>
</dbReference>
<dbReference type="GO" id="GO:0016597">
    <property type="term" value="F:amino acid binding"/>
    <property type="evidence" value="ECO:0007669"/>
    <property type="project" value="InterPro"/>
</dbReference>
<dbReference type="GO" id="GO:0004070">
    <property type="term" value="F:aspartate carbamoyltransferase activity"/>
    <property type="evidence" value="ECO:0007669"/>
    <property type="project" value="UniProtKB-UniRule"/>
</dbReference>
<dbReference type="GO" id="GO:0006207">
    <property type="term" value="P:'de novo' pyrimidine nucleobase biosynthetic process"/>
    <property type="evidence" value="ECO:0007669"/>
    <property type="project" value="InterPro"/>
</dbReference>
<dbReference type="GO" id="GO:0044205">
    <property type="term" value="P:'de novo' UMP biosynthetic process"/>
    <property type="evidence" value="ECO:0007669"/>
    <property type="project" value="UniProtKB-UniRule"/>
</dbReference>
<dbReference type="GO" id="GO:0006520">
    <property type="term" value="P:amino acid metabolic process"/>
    <property type="evidence" value="ECO:0007669"/>
    <property type="project" value="InterPro"/>
</dbReference>
<dbReference type="FunFam" id="3.40.50.1370:FF:000001">
    <property type="entry name" value="Aspartate carbamoyltransferase"/>
    <property type="match status" value="1"/>
</dbReference>
<dbReference type="FunFam" id="3.40.50.1370:FF:000011">
    <property type="entry name" value="Aspartate carbamoyltransferase"/>
    <property type="match status" value="1"/>
</dbReference>
<dbReference type="Gene3D" id="3.40.50.1370">
    <property type="entry name" value="Aspartate/ornithine carbamoyltransferase"/>
    <property type="match status" value="2"/>
</dbReference>
<dbReference type="HAMAP" id="MF_00001">
    <property type="entry name" value="Asp_carb_tr"/>
    <property type="match status" value="1"/>
</dbReference>
<dbReference type="InterPro" id="IPR006132">
    <property type="entry name" value="Asp/Orn_carbamoyltranf_P-bd"/>
</dbReference>
<dbReference type="InterPro" id="IPR006130">
    <property type="entry name" value="Asp/Orn_carbamoylTrfase"/>
</dbReference>
<dbReference type="InterPro" id="IPR036901">
    <property type="entry name" value="Asp/Orn_carbamoylTrfase_sf"/>
</dbReference>
<dbReference type="InterPro" id="IPR002082">
    <property type="entry name" value="Asp_carbamoyltransf"/>
</dbReference>
<dbReference type="InterPro" id="IPR006131">
    <property type="entry name" value="Asp_carbamoyltransf_Asp/Orn-bd"/>
</dbReference>
<dbReference type="NCBIfam" id="TIGR00670">
    <property type="entry name" value="asp_carb_tr"/>
    <property type="match status" value="1"/>
</dbReference>
<dbReference type="NCBIfam" id="NF002032">
    <property type="entry name" value="PRK00856.1"/>
    <property type="match status" value="1"/>
</dbReference>
<dbReference type="PANTHER" id="PTHR45753:SF6">
    <property type="entry name" value="ASPARTATE CARBAMOYLTRANSFERASE"/>
    <property type="match status" value="1"/>
</dbReference>
<dbReference type="PANTHER" id="PTHR45753">
    <property type="entry name" value="ORNITHINE CARBAMOYLTRANSFERASE, MITOCHONDRIAL"/>
    <property type="match status" value="1"/>
</dbReference>
<dbReference type="Pfam" id="PF00185">
    <property type="entry name" value="OTCace"/>
    <property type="match status" value="1"/>
</dbReference>
<dbReference type="Pfam" id="PF02729">
    <property type="entry name" value="OTCace_N"/>
    <property type="match status" value="1"/>
</dbReference>
<dbReference type="PRINTS" id="PR00100">
    <property type="entry name" value="AOTCASE"/>
</dbReference>
<dbReference type="PRINTS" id="PR00101">
    <property type="entry name" value="ATCASE"/>
</dbReference>
<dbReference type="SUPFAM" id="SSF53671">
    <property type="entry name" value="Aspartate/ornithine carbamoyltransferase"/>
    <property type="match status" value="1"/>
</dbReference>
<dbReference type="PROSITE" id="PS00097">
    <property type="entry name" value="CARBAMOYLTRANSFERASE"/>
    <property type="match status" value="1"/>
</dbReference>
<comment type="function">
    <text evidence="1">Catalyzes the condensation of carbamoyl phosphate and aspartate to form carbamoyl aspartate and inorganic phosphate, the committed step in the de novo pyrimidine nucleotide biosynthesis pathway.</text>
</comment>
<comment type="catalytic activity">
    <reaction evidence="1">
        <text>carbamoyl phosphate + L-aspartate = N-carbamoyl-L-aspartate + phosphate + H(+)</text>
        <dbReference type="Rhea" id="RHEA:20013"/>
        <dbReference type="ChEBI" id="CHEBI:15378"/>
        <dbReference type="ChEBI" id="CHEBI:29991"/>
        <dbReference type="ChEBI" id="CHEBI:32814"/>
        <dbReference type="ChEBI" id="CHEBI:43474"/>
        <dbReference type="ChEBI" id="CHEBI:58228"/>
        <dbReference type="EC" id="2.1.3.2"/>
    </reaction>
</comment>
<comment type="pathway">
    <text evidence="1">Pyrimidine metabolism; UMP biosynthesis via de novo pathway; (S)-dihydroorotate from bicarbonate: step 2/3.</text>
</comment>
<comment type="subunit">
    <text evidence="1">Heterododecamer (2C3:3R2) of six catalytic PyrB chains organized as two trimers (C3), and six regulatory PyrI chains organized as three dimers (R2).</text>
</comment>
<comment type="similarity">
    <text evidence="1">Belongs to the aspartate/ornithine carbamoyltransferase superfamily. ATCase family.</text>
</comment>
<evidence type="ECO:0000255" key="1">
    <source>
        <dbReference type="HAMAP-Rule" id="MF_00001"/>
    </source>
</evidence>
<keyword id="KW-0665">Pyrimidine biosynthesis</keyword>
<keyword id="KW-1185">Reference proteome</keyword>
<keyword id="KW-0808">Transferase</keyword>
<organism>
    <name type="scientific">Bacillus licheniformis (strain ATCC 14580 / DSM 13 / JCM 2505 / CCUG 7422 / NBRC 12200 / NCIMB 9375 / NCTC 10341 / NRRL NRS-1264 / Gibson 46)</name>
    <dbReference type="NCBI Taxonomy" id="279010"/>
    <lineage>
        <taxon>Bacteria</taxon>
        <taxon>Bacillati</taxon>
        <taxon>Bacillota</taxon>
        <taxon>Bacilli</taxon>
        <taxon>Bacillales</taxon>
        <taxon>Bacillaceae</taxon>
        <taxon>Bacillus</taxon>
    </lineage>
</organism>
<proteinExistence type="inferred from homology"/>
<accession>Q65JV0</accession>
<accession>Q62VA5</accession>